<organism>
    <name type="scientific">Haemophilus influenzae (strain PittGG)</name>
    <dbReference type="NCBI Taxonomy" id="374931"/>
    <lineage>
        <taxon>Bacteria</taxon>
        <taxon>Pseudomonadati</taxon>
        <taxon>Pseudomonadota</taxon>
        <taxon>Gammaproteobacteria</taxon>
        <taxon>Pasteurellales</taxon>
        <taxon>Pasteurellaceae</taxon>
        <taxon>Haemophilus</taxon>
    </lineage>
</organism>
<dbReference type="EC" id="4.2.3.5" evidence="1"/>
<dbReference type="EMBL" id="CP000672">
    <property type="protein sequence ID" value="ABQ99704.1"/>
    <property type="molecule type" value="Genomic_DNA"/>
</dbReference>
<dbReference type="SMR" id="A5UFZ9"/>
<dbReference type="KEGG" id="hiq:CGSHiGG_03590"/>
<dbReference type="HOGENOM" id="CLU_034547_0_2_6"/>
<dbReference type="UniPathway" id="UPA00053">
    <property type="reaction ID" value="UER00090"/>
</dbReference>
<dbReference type="Proteomes" id="UP000001990">
    <property type="component" value="Chromosome"/>
</dbReference>
<dbReference type="GO" id="GO:0005829">
    <property type="term" value="C:cytosol"/>
    <property type="evidence" value="ECO:0007669"/>
    <property type="project" value="TreeGrafter"/>
</dbReference>
<dbReference type="GO" id="GO:0004107">
    <property type="term" value="F:chorismate synthase activity"/>
    <property type="evidence" value="ECO:0007669"/>
    <property type="project" value="UniProtKB-UniRule"/>
</dbReference>
<dbReference type="GO" id="GO:0010181">
    <property type="term" value="F:FMN binding"/>
    <property type="evidence" value="ECO:0007669"/>
    <property type="project" value="TreeGrafter"/>
</dbReference>
<dbReference type="GO" id="GO:0008652">
    <property type="term" value="P:amino acid biosynthetic process"/>
    <property type="evidence" value="ECO:0007669"/>
    <property type="project" value="UniProtKB-KW"/>
</dbReference>
<dbReference type="GO" id="GO:0009073">
    <property type="term" value="P:aromatic amino acid family biosynthetic process"/>
    <property type="evidence" value="ECO:0007669"/>
    <property type="project" value="UniProtKB-KW"/>
</dbReference>
<dbReference type="GO" id="GO:0009423">
    <property type="term" value="P:chorismate biosynthetic process"/>
    <property type="evidence" value="ECO:0007669"/>
    <property type="project" value="UniProtKB-UniRule"/>
</dbReference>
<dbReference type="CDD" id="cd07304">
    <property type="entry name" value="Chorismate_synthase"/>
    <property type="match status" value="1"/>
</dbReference>
<dbReference type="FunFam" id="3.60.150.10:FF:000001">
    <property type="entry name" value="Chorismate synthase"/>
    <property type="match status" value="1"/>
</dbReference>
<dbReference type="Gene3D" id="3.60.150.10">
    <property type="entry name" value="Chorismate synthase AroC"/>
    <property type="match status" value="1"/>
</dbReference>
<dbReference type="HAMAP" id="MF_00300">
    <property type="entry name" value="Chorismate_synth"/>
    <property type="match status" value="1"/>
</dbReference>
<dbReference type="InterPro" id="IPR000453">
    <property type="entry name" value="Chorismate_synth"/>
</dbReference>
<dbReference type="InterPro" id="IPR035904">
    <property type="entry name" value="Chorismate_synth_AroC_sf"/>
</dbReference>
<dbReference type="InterPro" id="IPR020541">
    <property type="entry name" value="Chorismate_synthase_CS"/>
</dbReference>
<dbReference type="NCBIfam" id="TIGR00033">
    <property type="entry name" value="aroC"/>
    <property type="match status" value="1"/>
</dbReference>
<dbReference type="NCBIfam" id="NF003793">
    <property type="entry name" value="PRK05382.1"/>
    <property type="match status" value="1"/>
</dbReference>
<dbReference type="PANTHER" id="PTHR21085">
    <property type="entry name" value="CHORISMATE SYNTHASE"/>
    <property type="match status" value="1"/>
</dbReference>
<dbReference type="PANTHER" id="PTHR21085:SF0">
    <property type="entry name" value="CHORISMATE SYNTHASE"/>
    <property type="match status" value="1"/>
</dbReference>
<dbReference type="Pfam" id="PF01264">
    <property type="entry name" value="Chorismate_synt"/>
    <property type="match status" value="1"/>
</dbReference>
<dbReference type="PIRSF" id="PIRSF001456">
    <property type="entry name" value="Chorismate_synth"/>
    <property type="match status" value="1"/>
</dbReference>
<dbReference type="SUPFAM" id="SSF103263">
    <property type="entry name" value="Chorismate synthase, AroC"/>
    <property type="match status" value="1"/>
</dbReference>
<dbReference type="PROSITE" id="PS00787">
    <property type="entry name" value="CHORISMATE_SYNTHASE_1"/>
    <property type="match status" value="1"/>
</dbReference>
<dbReference type="PROSITE" id="PS00788">
    <property type="entry name" value="CHORISMATE_SYNTHASE_2"/>
    <property type="match status" value="1"/>
</dbReference>
<dbReference type="PROSITE" id="PS00789">
    <property type="entry name" value="CHORISMATE_SYNTHASE_3"/>
    <property type="match status" value="1"/>
</dbReference>
<protein>
    <recommendedName>
        <fullName evidence="1">Chorismate synthase</fullName>
        <shortName evidence="1">CS</shortName>
        <ecNumber evidence="1">4.2.3.5</ecNumber>
    </recommendedName>
    <alternativeName>
        <fullName evidence="1">5-enolpyruvylshikimate-3-phosphate phospholyase</fullName>
    </alternativeName>
</protein>
<reference key="1">
    <citation type="journal article" date="2007" name="Genome Biol.">
        <title>Characterization and modeling of the Haemophilus influenzae core and supragenomes based on the complete genomic sequences of Rd and 12 clinical nontypeable strains.</title>
        <authorList>
            <person name="Hogg J.S."/>
            <person name="Hu F.Z."/>
            <person name="Janto B."/>
            <person name="Boissy R."/>
            <person name="Hayes J."/>
            <person name="Keefe R."/>
            <person name="Post J.C."/>
            <person name="Ehrlich G.D."/>
        </authorList>
    </citation>
    <scope>NUCLEOTIDE SEQUENCE [LARGE SCALE GENOMIC DNA]</scope>
    <source>
        <strain>PittGG</strain>
    </source>
</reference>
<proteinExistence type="inferred from homology"/>
<evidence type="ECO:0000255" key="1">
    <source>
        <dbReference type="HAMAP-Rule" id="MF_00300"/>
    </source>
</evidence>
<evidence type="ECO:0000256" key="2">
    <source>
        <dbReference type="SAM" id="MobiDB-lite"/>
    </source>
</evidence>
<name>AROC_HAEIG</name>
<gene>
    <name evidence="1" type="primary">aroC</name>
    <name type="ordered locus">CGSHiGG_03590</name>
</gene>
<comment type="function">
    <text evidence="1">Catalyzes the anti-1,4-elimination of the C-3 phosphate and the C-6 proR hydrogen from 5-enolpyruvylshikimate-3-phosphate (EPSP) to yield chorismate, which is the branch point compound that serves as the starting substrate for the three terminal pathways of aromatic amino acid biosynthesis. This reaction introduces a second double bond into the aromatic ring system.</text>
</comment>
<comment type="catalytic activity">
    <reaction evidence="1">
        <text>5-O-(1-carboxyvinyl)-3-phosphoshikimate = chorismate + phosphate</text>
        <dbReference type="Rhea" id="RHEA:21020"/>
        <dbReference type="ChEBI" id="CHEBI:29748"/>
        <dbReference type="ChEBI" id="CHEBI:43474"/>
        <dbReference type="ChEBI" id="CHEBI:57701"/>
        <dbReference type="EC" id="4.2.3.5"/>
    </reaction>
</comment>
<comment type="cofactor">
    <cofactor evidence="1">
        <name>FMNH2</name>
        <dbReference type="ChEBI" id="CHEBI:57618"/>
    </cofactor>
    <text evidence="1">Reduced FMN (FMNH(2)).</text>
</comment>
<comment type="pathway">
    <text evidence="1">Metabolic intermediate biosynthesis; chorismate biosynthesis; chorismate from D-erythrose 4-phosphate and phosphoenolpyruvate: step 7/7.</text>
</comment>
<comment type="subunit">
    <text evidence="1">Homotetramer.</text>
</comment>
<comment type="similarity">
    <text evidence="1">Belongs to the chorismate synthase family.</text>
</comment>
<accession>A5UFZ9</accession>
<keyword id="KW-0028">Amino-acid biosynthesis</keyword>
<keyword id="KW-0057">Aromatic amino acid biosynthesis</keyword>
<keyword id="KW-0274">FAD</keyword>
<keyword id="KW-0285">Flavoprotein</keyword>
<keyword id="KW-0288">FMN</keyword>
<keyword id="KW-0456">Lyase</keyword>
<keyword id="KW-0521">NADP</keyword>
<sequence>MAGNTIGQLFRVTTFGESHGIALGCIVDGVPPNLELSEKDIQPDLDRRKPGTSRYTTPRREDDEVQILSGVFEGKTTGTSIGMIIKNGDQRSQDYGDIKDRFRPGHADFTYQQKYGIRDYRGGGRSSARETAMRVAAGAIAKKYLREHFGIEVRGFLSQIGHVKVAPQTIGDIDWEKVNSNPFFCPDESAVEKFDELIRELKKEGDSIGAKLTVIAENVPVGLGEPVFDRLDADLAHALMGINAVKGVEIGDGFAVVEQRGSEHRDEMTPDGFESNHAGGILGGISSGQPIIATIALKPTSSITIPGRSINLKGEAVEVVTKGRHDPCVGIRAVPIAEAMMAIVLLDHLLRFKAQCK</sequence>
<feature type="chain" id="PRO_1000022495" description="Chorismate synthase">
    <location>
        <begin position="1"/>
        <end position="357"/>
    </location>
</feature>
<feature type="region of interest" description="Disordered" evidence="2">
    <location>
        <begin position="38"/>
        <end position="60"/>
    </location>
</feature>
<feature type="compositionally biased region" description="Basic and acidic residues" evidence="2">
    <location>
        <begin position="38"/>
        <end position="49"/>
    </location>
</feature>
<feature type="binding site" evidence="1">
    <location>
        <position position="48"/>
    </location>
    <ligand>
        <name>NADP(+)</name>
        <dbReference type="ChEBI" id="CHEBI:58349"/>
    </ligand>
</feature>
<feature type="binding site" evidence="1">
    <location>
        <position position="54"/>
    </location>
    <ligand>
        <name>NADP(+)</name>
        <dbReference type="ChEBI" id="CHEBI:58349"/>
    </ligand>
</feature>
<feature type="binding site" evidence="1">
    <location>
        <begin position="125"/>
        <end position="127"/>
    </location>
    <ligand>
        <name>FMN</name>
        <dbReference type="ChEBI" id="CHEBI:58210"/>
    </ligand>
</feature>
<feature type="binding site" evidence="1">
    <location>
        <begin position="243"/>
        <end position="244"/>
    </location>
    <ligand>
        <name>FMN</name>
        <dbReference type="ChEBI" id="CHEBI:58210"/>
    </ligand>
</feature>
<feature type="binding site" evidence="1">
    <location>
        <position position="283"/>
    </location>
    <ligand>
        <name>FMN</name>
        <dbReference type="ChEBI" id="CHEBI:58210"/>
    </ligand>
</feature>
<feature type="binding site" evidence="1">
    <location>
        <begin position="298"/>
        <end position="302"/>
    </location>
    <ligand>
        <name>FMN</name>
        <dbReference type="ChEBI" id="CHEBI:58210"/>
    </ligand>
</feature>
<feature type="binding site" evidence="1">
    <location>
        <position position="324"/>
    </location>
    <ligand>
        <name>FMN</name>
        <dbReference type="ChEBI" id="CHEBI:58210"/>
    </ligand>
</feature>